<name>PA23_MICNI</name>
<dbReference type="EC" id="3.1.1.4"/>
<dbReference type="PIR" id="C35948">
    <property type="entry name" value="C35948"/>
</dbReference>
<dbReference type="SMR" id="P21792"/>
<dbReference type="GO" id="GO:0005576">
    <property type="term" value="C:extracellular region"/>
    <property type="evidence" value="ECO:0007669"/>
    <property type="project" value="UniProtKB-SubCell"/>
</dbReference>
<dbReference type="GO" id="GO:0004623">
    <property type="term" value="F:phospholipase A2 activity"/>
    <property type="evidence" value="ECO:0007669"/>
    <property type="project" value="UniProtKB-EC"/>
</dbReference>
<dbReference type="GO" id="GO:0090729">
    <property type="term" value="F:toxin activity"/>
    <property type="evidence" value="ECO:0007669"/>
    <property type="project" value="UniProtKB-KW"/>
</dbReference>
<dbReference type="GO" id="GO:0050482">
    <property type="term" value="P:arachidonate secretion"/>
    <property type="evidence" value="ECO:0007669"/>
    <property type="project" value="InterPro"/>
</dbReference>
<dbReference type="GO" id="GO:0016042">
    <property type="term" value="P:lipid catabolic process"/>
    <property type="evidence" value="ECO:0007669"/>
    <property type="project" value="UniProtKB-KW"/>
</dbReference>
<dbReference type="GO" id="GO:0006644">
    <property type="term" value="P:phospholipid metabolic process"/>
    <property type="evidence" value="ECO:0007669"/>
    <property type="project" value="InterPro"/>
</dbReference>
<dbReference type="InterPro" id="IPR036444">
    <property type="entry name" value="PLipase_A2_dom_sf"/>
</dbReference>
<dbReference type="SUPFAM" id="SSF48619">
    <property type="entry name" value="Phospholipase A2, PLA2"/>
    <property type="match status" value="1"/>
</dbReference>
<reference key="1">
    <citation type="journal article" date="1990" name="Toxicon">
        <title>Isolation and characterization of three toxic phospholipases from the venom of the coral snake Micrurus nigrocinctus.</title>
        <authorList>
            <person name="Mochca-Morales J."/>
            <person name="Martin B.M."/>
            <person name="Zamudio F.Z."/>
            <person name="Possani L.D."/>
        </authorList>
    </citation>
    <scope>PROTEIN SEQUENCE</scope>
    <source>
        <tissue>Venom</tissue>
    </source>
</reference>
<keyword id="KW-0106">Calcium</keyword>
<keyword id="KW-0903">Direct protein sequencing</keyword>
<keyword id="KW-0378">Hydrolase</keyword>
<keyword id="KW-0442">Lipid degradation</keyword>
<keyword id="KW-0443">Lipid metabolism</keyword>
<keyword id="KW-0528">Neurotoxin</keyword>
<keyword id="KW-0638">Presynaptic neurotoxin</keyword>
<keyword id="KW-0964">Secreted</keyword>
<keyword id="KW-0800">Toxin</keyword>
<accession>P21792</accession>
<protein>
    <recommendedName>
        <fullName>Phospholipase A2 3</fullName>
        <shortName>svPLA2</shortName>
        <ecNumber>3.1.1.4</ecNumber>
    </recommendedName>
    <alternativeName>
        <fullName>Phosphatidylcholine 2-acylhydrolase</fullName>
    </alternativeName>
</protein>
<sequence>NLYQFKNMIKCTNTRMWWSFTNAGCYDG</sequence>
<comment type="function">
    <text>Snake venom phospholipase A2 (PLA2) that inhibits neuromuscular transmission by blocking acetylcholine release from the nerve termini. PLA2 catalyzes the calcium-dependent hydrolysis of the 2-acyl groups in 3-sn-phosphoglycerides.</text>
</comment>
<comment type="catalytic activity">
    <reaction evidence="2 3">
        <text>a 1,2-diacyl-sn-glycero-3-phosphocholine + H2O = a 1-acyl-sn-glycero-3-phosphocholine + a fatty acid + H(+)</text>
        <dbReference type="Rhea" id="RHEA:15801"/>
        <dbReference type="ChEBI" id="CHEBI:15377"/>
        <dbReference type="ChEBI" id="CHEBI:15378"/>
        <dbReference type="ChEBI" id="CHEBI:28868"/>
        <dbReference type="ChEBI" id="CHEBI:57643"/>
        <dbReference type="ChEBI" id="CHEBI:58168"/>
        <dbReference type="EC" id="3.1.1.4"/>
    </reaction>
</comment>
<comment type="cofactor">
    <cofactor evidence="1">
        <name>Ca(2+)</name>
        <dbReference type="ChEBI" id="CHEBI:29108"/>
    </cofactor>
    <text evidence="1">Binds 1 Ca(2+) ion.</text>
</comment>
<comment type="subcellular location">
    <subcellularLocation>
        <location>Secreted</location>
    </subcellularLocation>
</comment>
<comment type="tissue specificity">
    <text>Expressed by the venom gland.</text>
</comment>
<comment type="similarity">
    <text evidence="4">Belongs to the phospholipase A2 family. Group I subfamily.</text>
</comment>
<proteinExistence type="evidence at protein level"/>
<organism>
    <name type="scientific">Micrurus nigrocinctus</name>
    <name type="common">Central American coral snake</name>
    <name type="synonym">Gargantilla</name>
    <dbReference type="NCBI Taxonomy" id="8635"/>
    <lineage>
        <taxon>Eukaryota</taxon>
        <taxon>Metazoa</taxon>
        <taxon>Chordata</taxon>
        <taxon>Craniata</taxon>
        <taxon>Vertebrata</taxon>
        <taxon>Euteleostomi</taxon>
        <taxon>Lepidosauria</taxon>
        <taxon>Squamata</taxon>
        <taxon>Bifurcata</taxon>
        <taxon>Unidentata</taxon>
        <taxon>Episquamata</taxon>
        <taxon>Toxicofera</taxon>
        <taxon>Serpentes</taxon>
        <taxon>Colubroidea</taxon>
        <taxon>Elapidae</taxon>
        <taxon>Elapinae</taxon>
        <taxon>Micrurus</taxon>
    </lineage>
</organism>
<evidence type="ECO:0000250" key="1"/>
<evidence type="ECO:0000255" key="2">
    <source>
        <dbReference type="PROSITE-ProRule" id="PRU10035"/>
    </source>
</evidence>
<evidence type="ECO:0000255" key="3">
    <source>
        <dbReference type="PROSITE-ProRule" id="PRU10036"/>
    </source>
</evidence>
<evidence type="ECO:0000305" key="4"/>
<feature type="chain" id="PRO_0000161660" description="Phospholipase A2 3">
    <location>
        <begin position="1"/>
        <end position="28" status="greater than"/>
    </location>
</feature>
<feature type="non-terminal residue">
    <location>
        <position position="28"/>
    </location>
</feature>